<protein>
    <recommendedName>
        <fullName evidence="5">Myotoxin-1</fullName>
    </recommendedName>
    <alternativeName>
        <fullName evidence="4">Myotoxin I</fullName>
    </alternativeName>
</protein>
<proteinExistence type="evidence at protein level"/>
<keyword id="KW-0929">Antimicrobial</keyword>
<keyword id="KW-0903">Direct protein sequencing</keyword>
<keyword id="KW-1015">Disulfide bond</keyword>
<keyword id="KW-0872">Ion channel impairing toxin</keyword>
<keyword id="KW-0959">Myotoxin</keyword>
<keyword id="KW-0528">Neurotoxin</keyword>
<keyword id="KW-0632">Potassium channel impairing toxin</keyword>
<keyword id="KW-0964">Secreted</keyword>
<keyword id="KW-0800">Toxin</keyword>
<keyword id="KW-1220">Voltage-gated potassium channel impairing toxin</keyword>
<dbReference type="PIR" id="A29089">
    <property type="entry name" value="A29089"/>
</dbReference>
<dbReference type="SMR" id="P12028"/>
<dbReference type="GO" id="GO:0005576">
    <property type="term" value="C:extracellular region"/>
    <property type="evidence" value="ECO:0007669"/>
    <property type="project" value="UniProtKB-SubCell"/>
</dbReference>
<dbReference type="GO" id="GO:0015459">
    <property type="term" value="F:potassium channel regulator activity"/>
    <property type="evidence" value="ECO:0007669"/>
    <property type="project" value="UniProtKB-KW"/>
</dbReference>
<dbReference type="GO" id="GO:0090729">
    <property type="term" value="F:toxin activity"/>
    <property type="evidence" value="ECO:0007669"/>
    <property type="project" value="UniProtKB-KW"/>
</dbReference>
<dbReference type="GO" id="GO:0044564">
    <property type="term" value="P:envenomation resulting in occlusion of the pore of voltage-gated potassium channel in another organism"/>
    <property type="evidence" value="ECO:0000250"/>
    <property type="project" value="UniProtKB"/>
</dbReference>
<dbReference type="FunFam" id="2.20.20.10:FF:000001">
    <property type="entry name" value="Crotamine"/>
    <property type="match status" value="1"/>
</dbReference>
<dbReference type="Gene3D" id="2.20.20.10">
    <property type="entry name" value="Anthopleurin-A"/>
    <property type="match status" value="1"/>
</dbReference>
<dbReference type="InterPro" id="IPR023355">
    <property type="entry name" value="Myo_ane_neurotoxin_sf"/>
</dbReference>
<dbReference type="InterPro" id="IPR000881">
    <property type="entry name" value="Myotoxin"/>
</dbReference>
<dbReference type="Pfam" id="PF00819">
    <property type="entry name" value="Myotoxins"/>
    <property type="match status" value="1"/>
</dbReference>
<dbReference type="PRINTS" id="PR00283">
    <property type="entry name" value="MYOTOXIN"/>
</dbReference>
<dbReference type="SUPFAM" id="SSF57392">
    <property type="entry name" value="Defensin-like"/>
    <property type="match status" value="1"/>
</dbReference>
<dbReference type="PROSITE" id="PS00459">
    <property type="entry name" value="MYOTOXINS_1"/>
    <property type="match status" value="1"/>
</dbReference>
<dbReference type="PROSITE" id="PS51345">
    <property type="entry name" value="MYOTOXINS_2"/>
    <property type="match status" value="1"/>
</dbReference>
<sequence>YKRCHKKEGHCFPKTVICLPPSSDFGKMDCRWKWKCCKKGSVN</sequence>
<feature type="chain" id="PRO_0000221564" description="Myotoxin-1" evidence="3">
    <location>
        <begin position="1"/>
        <end position="43"/>
    </location>
</feature>
<feature type="disulfide bond" evidence="2">
    <location>
        <begin position="4"/>
        <end position="36"/>
    </location>
</feature>
<feature type="disulfide bond" evidence="2">
    <location>
        <begin position="11"/>
        <end position="30"/>
    </location>
</feature>
<feature type="disulfide bond" evidence="2">
    <location>
        <begin position="18"/>
        <end position="37"/>
    </location>
</feature>
<comment type="function">
    <text evidence="2">Cationic peptide that possesses multiple functions. It acts as a cell-penetrating peptide (CPP), and as a potent voltage-gated potassium channel (Kv) inhibitor. It exhibits antimicrobial activities, hind limb paralysis, and severe muscle necrosis by a non-enzymatic mechanism.</text>
</comment>
<comment type="subunit">
    <text evidence="1">Monomer.</text>
</comment>
<comment type="subcellular location">
    <subcellularLocation>
        <location evidence="3">Secreted</location>
    </subcellularLocation>
</comment>
<comment type="tissue specificity">
    <text evidence="6">Expressed by the venom gland.</text>
</comment>
<comment type="similarity">
    <text evidence="5">Belongs to the crotamine-myotoxin family.</text>
</comment>
<organism>
    <name type="scientific">Crotalus concolor</name>
    <name type="common">Midget faded rattlesnake</name>
    <name type="synonym">Crotalus oreganus concolor</name>
    <dbReference type="NCBI Taxonomy" id="8740"/>
    <lineage>
        <taxon>Eukaryota</taxon>
        <taxon>Metazoa</taxon>
        <taxon>Chordata</taxon>
        <taxon>Craniata</taxon>
        <taxon>Vertebrata</taxon>
        <taxon>Euteleostomi</taxon>
        <taxon>Lepidosauria</taxon>
        <taxon>Squamata</taxon>
        <taxon>Bifurcata</taxon>
        <taxon>Unidentata</taxon>
        <taxon>Episquamata</taxon>
        <taxon>Toxicofera</taxon>
        <taxon>Serpentes</taxon>
        <taxon>Colubroidea</taxon>
        <taxon>Viperidae</taxon>
        <taxon>Crotalinae</taxon>
        <taxon>Crotalus</taxon>
    </lineage>
</organism>
<evidence type="ECO:0000250" key="1"/>
<evidence type="ECO:0000250" key="2">
    <source>
        <dbReference type="UniProtKB" id="Q9PWF3"/>
    </source>
</evidence>
<evidence type="ECO:0000269" key="3">
    <source>
    </source>
</evidence>
<evidence type="ECO:0000303" key="4">
    <source>
    </source>
</evidence>
<evidence type="ECO:0000305" key="5"/>
<evidence type="ECO:0000305" key="6">
    <source>
    </source>
</evidence>
<reference key="1">
    <citation type="journal article" date="1987" name="Toxicon">
        <title>Amino acid sequences of myotoxins from Crotalus viridis concolor venom.</title>
        <authorList>
            <person name="Bieber A.L."/>
            <person name="McParland R.H."/>
            <person name="Becker R.R."/>
        </authorList>
    </citation>
    <scope>PROTEIN SEQUENCE</scope>
    <scope>SUBCELLULAR LOCATION</scope>
    <source>
        <tissue>Venom</tissue>
    </source>
</reference>
<accession>P12028</accession>
<name>MYX1_CROCL</name>